<sequence length="130" mass="14127">MSMQDPIADMLTRIRNGQAANKAAVTMPSSKLKVAIANVLKEEGFIEDFKVEGDTKPELELTLKYFQGKAVVESIQRVSRPGLRIYKRKDELPKVMAGLGIAVVSTSKGVMTDRAARQAGLGGEIICYVA</sequence>
<gene>
    <name evidence="1" type="primary">rpsH</name>
    <name type="ordered locus">UTI89_C3755</name>
</gene>
<name>RS8_ECOUT</name>
<dbReference type="EMBL" id="CP000243">
    <property type="protein sequence ID" value="ABE09192.1"/>
    <property type="molecule type" value="Genomic_DNA"/>
</dbReference>
<dbReference type="RefSeq" id="WP_000062611.1">
    <property type="nucleotide sequence ID" value="NZ_CP064825.1"/>
</dbReference>
<dbReference type="SMR" id="Q1R622"/>
<dbReference type="GeneID" id="93778681"/>
<dbReference type="KEGG" id="eci:UTI89_C3755"/>
<dbReference type="HOGENOM" id="CLU_098428_0_0_6"/>
<dbReference type="Proteomes" id="UP000001952">
    <property type="component" value="Chromosome"/>
</dbReference>
<dbReference type="GO" id="GO:1990904">
    <property type="term" value="C:ribonucleoprotein complex"/>
    <property type="evidence" value="ECO:0007669"/>
    <property type="project" value="UniProtKB-KW"/>
</dbReference>
<dbReference type="GO" id="GO:0005840">
    <property type="term" value="C:ribosome"/>
    <property type="evidence" value="ECO:0007669"/>
    <property type="project" value="UniProtKB-KW"/>
</dbReference>
<dbReference type="GO" id="GO:0019843">
    <property type="term" value="F:rRNA binding"/>
    <property type="evidence" value="ECO:0007669"/>
    <property type="project" value="UniProtKB-UniRule"/>
</dbReference>
<dbReference type="GO" id="GO:0003735">
    <property type="term" value="F:structural constituent of ribosome"/>
    <property type="evidence" value="ECO:0007669"/>
    <property type="project" value="InterPro"/>
</dbReference>
<dbReference type="GO" id="GO:0006412">
    <property type="term" value="P:translation"/>
    <property type="evidence" value="ECO:0007669"/>
    <property type="project" value="UniProtKB-UniRule"/>
</dbReference>
<dbReference type="FunFam" id="3.30.1370.30:FF:000003">
    <property type="entry name" value="30S ribosomal protein S8"/>
    <property type="match status" value="1"/>
</dbReference>
<dbReference type="FunFam" id="3.30.1490.10:FF:000001">
    <property type="entry name" value="30S ribosomal protein S8"/>
    <property type="match status" value="1"/>
</dbReference>
<dbReference type="Gene3D" id="3.30.1370.30">
    <property type="match status" value="1"/>
</dbReference>
<dbReference type="Gene3D" id="3.30.1490.10">
    <property type="match status" value="1"/>
</dbReference>
<dbReference type="HAMAP" id="MF_01302_B">
    <property type="entry name" value="Ribosomal_uS8_B"/>
    <property type="match status" value="1"/>
</dbReference>
<dbReference type="InterPro" id="IPR000630">
    <property type="entry name" value="Ribosomal_uS8"/>
</dbReference>
<dbReference type="InterPro" id="IPR047863">
    <property type="entry name" value="Ribosomal_uS8_CS"/>
</dbReference>
<dbReference type="InterPro" id="IPR035987">
    <property type="entry name" value="Ribosomal_uS8_sf"/>
</dbReference>
<dbReference type="NCBIfam" id="NF001109">
    <property type="entry name" value="PRK00136.1"/>
    <property type="match status" value="1"/>
</dbReference>
<dbReference type="PANTHER" id="PTHR11758">
    <property type="entry name" value="40S RIBOSOMAL PROTEIN S15A"/>
    <property type="match status" value="1"/>
</dbReference>
<dbReference type="Pfam" id="PF00410">
    <property type="entry name" value="Ribosomal_S8"/>
    <property type="match status" value="1"/>
</dbReference>
<dbReference type="SUPFAM" id="SSF56047">
    <property type="entry name" value="Ribosomal protein S8"/>
    <property type="match status" value="1"/>
</dbReference>
<dbReference type="PROSITE" id="PS00053">
    <property type="entry name" value="RIBOSOMAL_S8"/>
    <property type="match status" value="1"/>
</dbReference>
<proteinExistence type="inferred from homology"/>
<reference key="1">
    <citation type="journal article" date="2006" name="Proc. Natl. Acad. Sci. U.S.A.">
        <title>Identification of genes subject to positive selection in uropathogenic strains of Escherichia coli: a comparative genomics approach.</title>
        <authorList>
            <person name="Chen S.L."/>
            <person name="Hung C.-S."/>
            <person name="Xu J."/>
            <person name="Reigstad C.S."/>
            <person name="Magrini V."/>
            <person name="Sabo A."/>
            <person name="Blasiar D."/>
            <person name="Bieri T."/>
            <person name="Meyer R.R."/>
            <person name="Ozersky P."/>
            <person name="Armstrong J.R."/>
            <person name="Fulton R.S."/>
            <person name="Latreille J.P."/>
            <person name="Spieth J."/>
            <person name="Hooton T.M."/>
            <person name="Mardis E.R."/>
            <person name="Hultgren S.J."/>
            <person name="Gordon J.I."/>
        </authorList>
    </citation>
    <scope>NUCLEOTIDE SEQUENCE [LARGE SCALE GENOMIC DNA]</scope>
    <source>
        <strain>UTI89 / UPEC</strain>
    </source>
</reference>
<comment type="function">
    <text evidence="1">One of the primary rRNA binding proteins, it binds directly to 16S rRNA central domain where it helps coordinate assembly of the platform of the 30S subunit.</text>
</comment>
<comment type="subunit">
    <text evidence="1">Part of the 30S ribosomal subunit. Contacts proteins S5 and S12.</text>
</comment>
<comment type="similarity">
    <text evidence="1">Belongs to the universal ribosomal protein uS8 family.</text>
</comment>
<accession>Q1R622</accession>
<feature type="chain" id="PRO_0000290835" description="Small ribosomal subunit protein uS8">
    <location>
        <begin position="1"/>
        <end position="130"/>
    </location>
</feature>
<evidence type="ECO:0000255" key="1">
    <source>
        <dbReference type="HAMAP-Rule" id="MF_01302"/>
    </source>
</evidence>
<evidence type="ECO:0000305" key="2"/>
<protein>
    <recommendedName>
        <fullName evidence="1">Small ribosomal subunit protein uS8</fullName>
    </recommendedName>
    <alternativeName>
        <fullName evidence="2">30S ribosomal protein S8</fullName>
    </alternativeName>
</protein>
<organism>
    <name type="scientific">Escherichia coli (strain UTI89 / UPEC)</name>
    <dbReference type="NCBI Taxonomy" id="364106"/>
    <lineage>
        <taxon>Bacteria</taxon>
        <taxon>Pseudomonadati</taxon>
        <taxon>Pseudomonadota</taxon>
        <taxon>Gammaproteobacteria</taxon>
        <taxon>Enterobacterales</taxon>
        <taxon>Enterobacteriaceae</taxon>
        <taxon>Escherichia</taxon>
    </lineage>
</organism>
<keyword id="KW-0687">Ribonucleoprotein</keyword>
<keyword id="KW-0689">Ribosomal protein</keyword>
<keyword id="KW-0694">RNA-binding</keyword>
<keyword id="KW-0699">rRNA-binding</keyword>